<protein>
    <recommendedName>
        <fullName>Zinc finger protein with KRAB and SCAN domains 1</fullName>
    </recommendedName>
    <alternativeName>
        <fullName>Zinc finger protein 139</fullName>
    </alternativeName>
    <alternativeName>
        <fullName>Zinc finger protein 36</fullName>
    </alternativeName>
    <alternativeName>
        <fullName>Zinc finger protein KOX18</fullName>
    </alternativeName>
</protein>
<accession>P17029</accession>
<accession>A4D294</accession>
<accession>P52745</accession>
<accession>Q2M1U1</accession>
<accession>Q8TBW5</accession>
<accession>Q8TEK7</accession>
<evidence type="ECO:0000255" key="1">
    <source>
        <dbReference type="PROSITE-ProRule" id="PRU00042"/>
    </source>
</evidence>
<evidence type="ECO:0000255" key="2">
    <source>
        <dbReference type="PROSITE-ProRule" id="PRU00119"/>
    </source>
</evidence>
<evidence type="ECO:0000255" key="3">
    <source>
        <dbReference type="PROSITE-ProRule" id="PRU00187"/>
    </source>
</evidence>
<evidence type="ECO:0000256" key="4">
    <source>
        <dbReference type="SAM" id="MobiDB-lite"/>
    </source>
</evidence>
<evidence type="ECO:0000269" key="5">
    <source>
    </source>
</evidence>
<evidence type="ECO:0000305" key="6"/>
<evidence type="ECO:0007744" key="7">
    <source>
    </source>
</evidence>
<evidence type="ECO:0007744" key="8">
    <source>
    </source>
</evidence>
<evidence type="ECO:0007744" key="9">
    <source>
    </source>
</evidence>
<evidence type="ECO:0007744" key="10">
    <source>
    </source>
</evidence>
<evidence type="ECO:0007744" key="11">
    <source>
    </source>
</evidence>
<evidence type="ECO:0007744" key="12">
    <source>
    </source>
</evidence>
<evidence type="ECO:0007744" key="13">
    <source>
    </source>
</evidence>
<evidence type="ECO:0007744" key="14">
    <source>
    </source>
</evidence>
<evidence type="ECO:0007744" key="15">
    <source>
    </source>
</evidence>
<evidence type="ECO:0007744" key="16">
    <source>
    </source>
</evidence>
<organism>
    <name type="scientific">Homo sapiens</name>
    <name type="common">Human</name>
    <dbReference type="NCBI Taxonomy" id="9606"/>
    <lineage>
        <taxon>Eukaryota</taxon>
        <taxon>Metazoa</taxon>
        <taxon>Chordata</taxon>
        <taxon>Craniata</taxon>
        <taxon>Vertebrata</taxon>
        <taxon>Euteleostomi</taxon>
        <taxon>Mammalia</taxon>
        <taxon>Eutheria</taxon>
        <taxon>Euarchontoglires</taxon>
        <taxon>Primates</taxon>
        <taxon>Haplorrhini</taxon>
        <taxon>Catarrhini</taxon>
        <taxon>Hominidae</taxon>
        <taxon>Homo</taxon>
    </lineage>
</organism>
<name>ZKSC1_HUMAN</name>
<comment type="function">
    <text>May be involved in transcriptional regulation.</text>
</comment>
<comment type="interaction">
    <interactant intactId="EBI-10199654">
        <id>P17029</id>
    </interactant>
    <interactant intactId="EBI-1213983">
        <id>Q13164</id>
        <label>MAPK7</label>
    </interactant>
    <organismsDiffer>false</organismsDiffer>
    <experiments>3</experiments>
</comment>
<comment type="interaction">
    <interactant intactId="EBI-10199654">
        <id>P17029</id>
    </interactant>
    <interactant intactId="EBI-748974">
        <id>Q96CV9</id>
        <label>OPTN</label>
    </interactant>
    <organismsDiffer>false</organismsDiffer>
    <experiments>3</experiments>
</comment>
<comment type="interaction">
    <interactant intactId="EBI-10199654">
        <id>P17029</id>
    </interactant>
    <interactant intactId="EBI-739949">
        <id>Q9NX65</id>
        <label>ZSCAN32</label>
    </interactant>
    <organismsDiffer>false</organismsDiffer>
    <experiments>6</experiments>
</comment>
<comment type="subcellular location">
    <subcellularLocation>
        <location evidence="3">Nucleus</location>
    </subcellularLocation>
</comment>
<comment type="similarity">
    <text evidence="6">Belongs to the krueppel C2H2-type zinc-finger protein family.</text>
</comment>
<comment type="sequence caution" evidence="6">
    <conflict type="frameshift">
        <sequence resource="EMBL-CDS" id="AAC50264"/>
    </conflict>
</comment>
<gene>
    <name type="primary">ZKSCAN1</name>
    <name type="synonym">KOX18</name>
    <name type="synonym">ZNF139</name>
    <name type="synonym">ZNF36</name>
</gene>
<keyword id="KW-0238">DNA-binding</keyword>
<keyword id="KW-1017">Isopeptide bond</keyword>
<keyword id="KW-0479">Metal-binding</keyword>
<keyword id="KW-0539">Nucleus</keyword>
<keyword id="KW-0597">Phosphoprotein</keyword>
<keyword id="KW-1267">Proteomics identification</keyword>
<keyword id="KW-1185">Reference proteome</keyword>
<keyword id="KW-0677">Repeat</keyword>
<keyword id="KW-0804">Transcription</keyword>
<keyword id="KW-0805">Transcription regulation</keyword>
<keyword id="KW-0832">Ubl conjugation</keyword>
<keyword id="KW-0862">Zinc</keyword>
<keyword id="KW-0863">Zinc-finger</keyword>
<dbReference type="EMBL" id="AK074116">
    <property type="protein sequence ID" value="BAB84942.1"/>
    <property type="molecule type" value="mRNA"/>
</dbReference>
<dbReference type="EMBL" id="BX640646">
    <property type="protein sequence ID" value="CAE45792.1"/>
    <property type="molecule type" value="mRNA"/>
</dbReference>
<dbReference type="EMBL" id="CH236956">
    <property type="protein sequence ID" value="EAL23861.1"/>
    <property type="molecule type" value="Genomic_DNA"/>
</dbReference>
<dbReference type="EMBL" id="CH471091">
    <property type="protein sequence ID" value="EAW76613.1"/>
    <property type="molecule type" value="Genomic_DNA"/>
</dbReference>
<dbReference type="EMBL" id="BC022378">
    <property type="protein sequence ID" value="AAH22378.1"/>
    <property type="molecule type" value="mRNA"/>
</dbReference>
<dbReference type="EMBL" id="BC112224">
    <property type="protein sequence ID" value="AAI12225.1"/>
    <property type="molecule type" value="mRNA"/>
</dbReference>
<dbReference type="EMBL" id="BC113697">
    <property type="protein sequence ID" value="AAI13698.1"/>
    <property type="molecule type" value="mRNA"/>
</dbReference>
<dbReference type="EMBL" id="U09848">
    <property type="protein sequence ID" value="AAC50264.1"/>
    <property type="status" value="ALT_FRAME"/>
    <property type="molecule type" value="mRNA"/>
</dbReference>
<dbReference type="EMBL" id="X52349">
    <property type="protein sequence ID" value="CAA36575.1"/>
    <property type="molecule type" value="mRNA"/>
</dbReference>
<dbReference type="CCDS" id="CCDS34698.1"/>
<dbReference type="PIR" id="I38616">
    <property type="entry name" value="I38616"/>
</dbReference>
<dbReference type="RefSeq" id="NP_001333510.1">
    <property type="nucleotide sequence ID" value="NM_001346581.2"/>
</dbReference>
<dbReference type="RefSeq" id="NP_003430.1">
    <property type="nucleotide sequence ID" value="NM_003439.4"/>
</dbReference>
<dbReference type="RefSeq" id="XP_011514861.1">
    <property type="nucleotide sequence ID" value="XM_011516559.2"/>
</dbReference>
<dbReference type="RefSeq" id="XP_047276759.1">
    <property type="nucleotide sequence ID" value="XM_047420803.1"/>
</dbReference>
<dbReference type="RefSeq" id="XP_054214923.1">
    <property type="nucleotide sequence ID" value="XM_054358948.1"/>
</dbReference>
<dbReference type="SMR" id="P17029"/>
<dbReference type="BioGRID" id="113414">
    <property type="interactions" value="75"/>
</dbReference>
<dbReference type="FunCoup" id="P17029">
    <property type="interactions" value="905"/>
</dbReference>
<dbReference type="IntAct" id="P17029">
    <property type="interactions" value="44"/>
</dbReference>
<dbReference type="MINT" id="P17029"/>
<dbReference type="STRING" id="9606.ENSP00000323148"/>
<dbReference type="GlyGen" id="P17029">
    <property type="glycosylation" value="2 sites, 1 O-linked glycan (2 sites)"/>
</dbReference>
<dbReference type="iPTMnet" id="P17029"/>
<dbReference type="PhosphoSitePlus" id="P17029"/>
<dbReference type="BioMuta" id="ZKSCAN1"/>
<dbReference type="DMDM" id="85681856"/>
<dbReference type="jPOST" id="P17029"/>
<dbReference type="MassIVE" id="P17029"/>
<dbReference type="PaxDb" id="9606-ENSP00000323148"/>
<dbReference type="PeptideAtlas" id="P17029"/>
<dbReference type="ProteomicsDB" id="53431"/>
<dbReference type="Pumba" id="P17029"/>
<dbReference type="ABCD" id="P17029">
    <property type="antibodies" value="1 sequenced antibody"/>
</dbReference>
<dbReference type="Antibodypedia" id="1764">
    <property type="antibodies" value="181 antibodies from 23 providers"/>
</dbReference>
<dbReference type="DNASU" id="7586"/>
<dbReference type="Ensembl" id="ENST00000324306.11">
    <property type="protein sequence ID" value="ENSP00000323148.6"/>
    <property type="gene ID" value="ENSG00000106261.17"/>
</dbReference>
<dbReference type="GeneID" id="7586"/>
<dbReference type="KEGG" id="hsa:7586"/>
<dbReference type="MANE-Select" id="ENST00000324306.11">
    <property type="protein sequence ID" value="ENSP00000323148.6"/>
    <property type="RefSeq nucleotide sequence ID" value="NM_003439.4"/>
    <property type="RefSeq protein sequence ID" value="NP_003430.1"/>
</dbReference>
<dbReference type="UCSC" id="uc003usk.3">
    <property type="organism name" value="human"/>
</dbReference>
<dbReference type="AGR" id="HGNC:13101"/>
<dbReference type="CTD" id="7586"/>
<dbReference type="DisGeNET" id="7586"/>
<dbReference type="GeneCards" id="ZKSCAN1"/>
<dbReference type="HGNC" id="HGNC:13101">
    <property type="gene designation" value="ZKSCAN1"/>
</dbReference>
<dbReference type="HPA" id="ENSG00000106261">
    <property type="expression patterns" value="Low tissue specificity"/>
</dbReference>
<dbReference type="MalaCards" id="ZKSCAN1"/>
<dbReference type="MIM" id="601260">
    <property type="type" value="gene"/>
</dbReference>
<dbReference type="neXtProt" id="NX_P17029"/>
<dbReference type="OpenTargets" id="ENSG00000106261"/>
<dbReference type="PharmGKB" id="PA37676"/>
<dbReference type="VEuPathDB" id="HostDB:ENSG00000106261"/>
<dbReference type="eggNOG" id="KOG1721">
    <property type="taxonomic scope" value="Eukaryota"/>
</dbReference>
<dbReference type="GeneTree" id="ENSGT00940000161592"/>
<dbReference type="InParanoid" id="P17029"/>
<dbReference type="OMA" id="IHNRERA"/>
<dbReference type="OrthoDB" id="6354171at2759"/>
<dbReference type="PAN-GO" id="P17029">
    <property type="GO annotations" value="3 GO annotations based on evolutionary models"/>
</dbReference>
<dbReference type="PhylomeDB" id="P17029"/>
<dbReference type="TreeFam" id="TF350830"/>
<dbReference type="PathwayCommons" id="P17029"/>
<dbReference type="Reactome" id="R-HSA-212436">
    <property type="pathway name" value="Generic Transcription Pathway"/>
</dbReference>
<dbReference type="SignaLink" id="P17029"/>
<dbReference type="BioGRID-ORCS" id="7586">
    <property type="hits" value="17 hits in 1181 CRISPR screens"/>
</dbReference>
<dbReference type="ChiTaRS" id="ZKSCAN1">
    <property type="organism name" value="human"/>
</dbReference>
<dbReference type="GeneWiki" id="ZKSCAN1"/>
<dbReference type="GenomeRNAi" id="7586"/>
<dbReference type="Pharos" id="P17029">
    <property type="development level" value="Tbio"/>
</dbReference>
<dbReference type="PRO" id="PR:P17029"/>
<dbReference type="Proteomes" id="UP000005640">
    <property type="component" value="Chromosome 7"/>
</dbReference>
<dbReference type="RNAct" id="P17029">
    <property type="molecule type" value="protein"/>
</dbReference>
<dbReference type="Bgee" id="ENSG00000106261">
    <property type="expression patterns" value="Expressed in upper leg skin and 206 other cell types or tissues"/>
</dbReference>
<dbReference type="ExpressionAtlas" id="P17029">
    <property type="expression patterns" value="baseline and differential"/>
</dbReference>
<dbReference type="GO" id="GO:0005634">
    <property type="term" value="C:nucleus"/>
    <property type="evidence" value="ECO:0007669"/>
    <property type="project" value="UniProtKB-SubCell"/>
</dbReference>
<dbReference type="GO" id="GO:0000981">
    <property type="term" value="F:DNA-binding transcription factor activity, RNA polymerase II-specific"/>
    <property type="evidence" value="ECO:0000318"/>
    <property type="project" value="GO_Central"/>
</dbReference>
<dbReference type="GO" id="GO:0000978">
    <property type="term" value="F:RNA polymerase II cis-regulatory region sequence-specific DNA binding"/>
    <property type="evidence" value="ECO:0000318"/>
    <property type="project" value="GO_Central"/>
</dbReference>
<dbReference type="GO" id="GO:0008270">
    <property type="term" value="F:zinc ion binding"/>
    <property type="evidence" value="ECO:0007669"/>
    <property type="project" value="UniProtKB-KW"/>
</dbReference>
<dbReference type="GO" id="GO:0006357">
    <property type="term" value="P:regulation of transcription by RNA polymerase II"/>
    <property type="evidence" value="ECO:0000318"/>
    <property type="project" value="GO_Central"/>
</dbReference>
<dbReference type="CDD" id="cd07765">
    <property type="entry name" value="KRAB_A-box"/>
    <property type="match status" value="1"/>
</dbReference>
<dbReference type="CDD" id="cd07936">
    <property type="entry name" value="SCAN"/>
    <property type="match status" value="1"/>
</dbReference>
<dbReference type="FunFam" id="3.30.160.60:FF:004137">
    <property type="match status" value="1"/>
</dbReference>
<dbReference type="FunFam" id="3.30.160.60:FF:004935">
    <property type="match status" value="1"/>
</dbReference>
<dbReference type="FunFam" id="3.30.160.60:FF:000944">
    <property type="entry name" value="zinc finger protein 232 isoform X1"/>
    <property type="match status" value="1"/>
</dbReference>
<dbReference type="FunFam" id="1.10.4020.10:FF:000001">
    <property type="entry name" value="zinc finger protein 263 isoform X1"/>
    <property type="match status" value="1"/>
</dbReference>
<dbReference type="FunFam" id="3.30.160.60:FF:002278">
    <property type="entry name" value="Zinc finger protein 320"/>
    <property type="match status" value="1"/>
</dbReference>
<dbReference type="FunFam" id="3.30.160.60:FF:002402">
    <property type="entry name" value="Zinc finger protein 347"/>
    <property type="match status" value="1"/>
</dbReference>
<dbReference type="FunFam" id="3.30.160.60:FF:000307">
    <property type="entry name" value="Zinc finger protein ZFP69 isoform 1"/>
    <property type="match status" value="1"/>
</dbReference>
<dbReference type="FunFam" id="3.30.160.60:FF:000330">
    <property type="entry name" value="Zinc finger with KRAB and SCAN domains 1"/>
    <property type="match status" value="1"/>
</dbReference>
<dbReference type="FunFam" id="3.30.160.60:FF:000496">
    <property type="entry name" value="Zinc finger with KRAB and SCAN domains 1"/>
    <property type="match status" value="1"/>
</dbReference>
<dbReference type="Gene3D" id="6.10.140.140">
    <property type="match status" value="1"/>
</dbReference>
<dbReference type="Gene3D" id="3.30.160.60">
    <property type="entry name" value="Classic Zinc Finger"/>
    <property type="match status" value="6"/>
</dbReference>
<dbReference type="Gene3D" id="1.10.4020.10">
    <property type="entry name" value="DNA breaking-rejoining enzymes"/>
    <property type="match status" value="1"/>
</dbReference>
<dbReference type="InterPro" id="IPR001909">
    <property type="entry name" value="KRAB"/>
</dbReference>
<dbReference type="InterPro" id="IPR036051">
    <property type="entry name" value="KRAB_dom_sf"/>
</dbReference>
<dbReference type="InterPro" id="IPR003309">
    <property type="entry name" value="SCAN_dom"/>
</dbReference>
<dbReference type="InterPro" id="IPR038269">
    <property type="entry name" value="SCAN_sf"/>
</dbReference>
<dbReference type="InterPro" id="IPR036236">
    <property type="entry name" value="Znf_C2H2_sf"/>
</dbReference>
<dbReference type="InterPro" id="IPR013087">
    <property type="entry name" value="Znf_C2H2_type"/>
</dbReference>
<dbReference type="PANTHER" id="PTHR23226">
    <property type="entry name" value="ZINC FINGER AND SCAN DOMAIN-CONTAINING"/>
    <property type="match status" value="1"/>
</dbReference>
<dbReference type="PANTHER" id="PTHR23226:SF94">
    <property type="entry name" value="ZINC FINGER PROTEIN WITH KRAB AND SCAN DOMAINS 1"/>
    <property type="match status" value="1"/>
</dbReference>
<dbReference type="Pfam" id="PF01352">
    <property type="entry name" value="KRAB"/>
    <property type="match status" value="1"/>
</dbReference>
<dbReference type="Pfam" id="PF02023">
    <property type="entry name" value="SCAN"/>
    <property type="match status" value="1"/>
</dbReference>
<dbReference type="Pfam" id="PF00096">
    <property type="entry name" value="zf-C2H2"/>
    <property type="match status" value="6"/>
</dbReference>
<dbReference type="SMART" id="SM00349">
    <property type="entry name" value="KRAB"/>
    <property type="match status" value="1"/>
</dbReference>
<dbReference type="SMART" id="SM00431">
    <property type="entry name" value="SCAN"/>
    <property type="match status" value="1"/>
</dbReference>
<dbReference type="SMART" id="SM00355">
    <property type="entry name" value="ZnF_C2H2"/>
    <property type="match status" value="6"/>
</dbReference>
<dbReference type="SUPFAM" id="SSF57667">
    <property type="entry name" value="beta-beta-alpha zinc fingers"/>
    <property type="match status" value="4"/>
</dbReference>
<dbReference type="SUPFAM" id="SSF109640">
    <property type="entry name" value="KRAB domain (Kruppel-associated box)"/>
    <property type="match status" value="1"/>
</dbReference>
<dbReference type="SUPFAM" id="SSF47353">
    <property type="entry name" value="Retrovirus capsid dimerization domain-like"/>
    <property type="match status" value="1"/>
</dbReference>
<dbReference type="PROSITE" id="PS50805">
    <property type="entry name" value="KRAB"/>
    <property type="match status" value="1"/>
</dbReference>
<dbReference type="PROSITE" id="PS50804">
    <property type="entry name" value="SCAN_BOX"/>
    <property type="match status" value="1"/>
</dbReference>
<dbReference type="PROSITE" id="PS00028">
    <property type="entry name" value="ZINC_FINGER_C2H2_1"/>
    <property type="match status" value="6"/>
</dbReference>
<dbReference type="PROSITE" id="PS50157">
    <property type="entry name" value="ZINC_FINGER_C2H2_2"/>
    <property type="match status" value="6"/>
</dbReference>
<proteinExistence type="evidence at protein level"/>
<feature type="chain" id="PRO_0000047753" description="Zinc finger protein with KRAB and SCAN domains 1">
    <location>
        <begin position="1"/>
        <end position="563"/>
    </location>
</feature>
<feature type="domain" description="SCAN box" evidence="3">
    <location>
        <begin position="56"/>
        <end position="138"/>
    </location>
</feature>
<feature type="domain" description="KRAB" evidence="2">
    <location>
        <begin position="227"/>
        <end position="300"/>
    </location>
</feature>
<feature type="zinc finger region" description="C2H2-type 1" evidence="1">
    <location>
        <begin position="377"/>
        <end position="399"/>
    </location>
</feature>
<feature type="zinc finger region" description="C2H2-type 2" evidence="1">
    <location>
        <begin position="405"/>
        <end position="427"/>
    </location>
</feature>
<feature type="zinc finger region" description="C2H2-type 3" evidence="1">
    <location>
        <begin position="433"/>
        <end position="455"/>
    </location>
</feature>
<feature type="zinc finger region" description="C2H2-type 4" evidence="1">
    <location>
        <begin position="461"/>
        <end position="483"/>
    </location>
</feature>
<feature type="zinc finger region" description="C2H2-type 5" evidence="1">
    <location>
        <begin position="489"/>
        <end position="511"/>
    </location>
</feature>
<feature type="zinc finger region" description="C2H2-type 6" evidence="1">
    <location>
        <begin position="517"/>
        <end position="539"/>
    </location>
</feature>
<feature type="region of interest" description="Disordered" evidence="4">
    <location>
        <begin position="1"/>
        <end position="51"/>
    </location>
</feature>
<feature type="region of interest" description="Disordered" evidence="4">
    <location>
        <begin position="257"/>
        <end position="373"/>
    </location>
</feature>
<feature type="compositionally biased region" description="Basic and acidic residues" evidence="4">
    <location>
        <begin position="270"/>
        <end position="289"/>
    </location>
</feature>
<feature type="compositionally biased region" description="Basic and acidic residues" evidence="4">
    <location>
        <begin position="297"/>
        <end position="352"/>
    </location>
</feature>
<feature type="modified residue" description="Phosphoserine" evidence="7 8 9 10 11 12 13">
    <location>
        <position position="13"/>
    </location>
</feature>
<feature type="modified residue" description="Phosphoserine" evidence="12 13">
    <location>
        <position position="208"/>
    </location>
</feature>
<feature type="cross-link" description="Glycyl lysine isopeptide (Lys-Gly) (interchain with G-Cter in SUMO2)" evidence="16">
    <location>
        <position position="27"/>
    </location>
</feature>
<feature type="cross-link" description="Glycyl lysine isopeptide (Lys-Gly) (interchain with G-Cter in SUMO2)" evidence="16">
    <location>
        <position position="181"/>
    </location>
</feature>
<feature type="cross-link" description="Glycyl lysine isopeptide (Lys-Gly) (interchain with G-Cter in SUMO2)" evidence="16">
    <location>
        <position position="228"/>
    </location>
</feature>
<feature type="cross-link" description="Glycyl lysine isopeptide (Lys-Gly) (interchain with G-Cter in SUMO2)" evidence="14 16">
    <location>
        <position position="280"/>
    </location>
</feature>
<feature type="cross-link" description="Glycyl lysine isopeptide (Lys-Gly) (interchain with G-Cter in SUMO2)" evidence="16">
    <location>
        <position position="299"/>
    </location>
</feature>
<feature type="cross-link" description="Glycyl lysine isopeptide (Lys-Gly) (interchain with G-Cter in SUMO2)" evidence="16">
    <location>
        <position position="304"/>
    </location>
</feature>
<feature type="cross-link" description="Glycyl lysine isopeptide (Lys-Gly) (interchain with G-Cter in SUMO2)" evidence="14 15 16">
    <location>
        <position position="339"/>
    </location>
</feature>
<feature type="cross-link" description="Glycyl lysine isopeptide (Lys-Gly) (interchain with G-Cter in SUMO2)" evidence="16">
    <location>
        <position position="375"/>
    </location>
</feature>
<feature type="cross-link" description="Glycyl lysine isopeptide (Lys-Gly) (interchain with G-Cter in SUMO2)" evidence="16">
    <location>
        <position position="412"/>
    </location>
</feature>
<feature type="cross-link" description="Glycyl lysine isopeptide (Lys-Gly) (interchain with G-Cter in SUMO2)" evidence="16">
    <location>
        <position position="440"/>
    </location>
</feature>
<feature type="cross-link" description="Glycyl lysine isopeptide (Lys-Gly) (interchain with G-Cter in SUMO2)" evidence="16">
    <location>
        <position position="478"/>
    </location>
</feature>
<feature type="cross-link" description="Glycyl lysine isopeptide (Lys-Gly) (interchain with G-Cter in SUMO2)" evidence="15 16">
    <location>
        <position position="560"/>
    </location>
</feature>
<feature type="sequence variant" id="VAR_024839" description="In dbSNP:rs17851996." evidence="5">
    <original>V</original>
    <variation>A</variation>
    <location>
        <position position="26"/>
    </location>
</feature>
<sequence>MMTAESREATGLSPQAAQEKDGIVIVKVEEEDEEDHMWGQDSTLQDTPPPDPEIFRQRFRRFCYQNTFGPREALSRLKELCHQWLRPEINTKEQILELLVLEQFLSILPKELQVWLQEYRPDSGEEAVTLLEDLELDLSGQQVPGQVHGPEMLARGMVPLDPVQESSSFDLHHEATQSHFKHSSRKPRLLQSRALPAAHIPAPPHEGSPRDQAMASALFTADSQAMVKIEDMAVSLILEEWGCQNLARRNLSRDNRQENYGSAFPQGGENRNENEESTSKAETSEDSASRGETTGRSQKEFGEKRDQEGKTGERQQKNPEEKTRKEKRDSGPAIGKDKKTITGERGPREKGKGLGRSFSLSSNFTTPEEVPTGTKSHRCDECGKCFTRSSSLIRHKIIHTGEKPYECSECGKAFSLNSNLVLHQRIHTGEKPHECNECGKAFSHSSNLILHQRIHSGEKPYECNECGKAFSQSSDLTKHQRIHTGEKPYECSECGKAFNRNSYLILHRRIHTREKPYKCTKCGKAFTRSSTLTLHHRIHARERASEYSPASLDAFGAFLKSCV</sequence>
<reference key="1">
    <citation type="journal article" date="2003" name="DNA Res.">
        <title>Characterization of long cDNA clones from human adult spleen. II. The complete sequences of 81 cDNA clones.</title>
        <authorList>
            <person name="Jikuya H."/>
            <person name="Takano J."/>
            <person name="Kikuno R."/>
            <person name="Hirosawa M."/>
            <person name="Nagase T."/>
            <person name="Nomura N."/>
            <person name="Ohara O."/>
        </authorList>
    </citation>
    <scope>NUCLEOTIDE SEQUENCE [LARGE SCALE MRNA]</scope>
    <source>
        <tissue>Spleen</tissue>
    </source>
</reference>
<reference key="2">
    <citation type="journal article" date="2007" name="BMC Genomics">
        <title>The full-ORF clone resource of the German cDNA consortium.</title>
        <authorList>
            <person name="Bechtel S."/>
            <person name="Rosenfelder H."/>
            <person name="Duda A."/>
            <person name="Schmidt C.P."/>
            <person name="Ernst U."/>
            <person name="Wellenreuther R."/>
            <person name="Mehrle A."/>
            <person name="Schuster C."/>
            <person name="Bahr A."/>
            <person name="Bloecker H."/>
            <person name="Heubner D."/>
            <person name="Hoerlein A."/>
            <person name="Michel G."/>
            <person name="Wedler H."/>
            <person name="Koehrer K."/>
            <person name="Ottenwaelder B."/>
            <person name="Poustka A."/>
            <person name="Wiemann S."/>
            <person name="Schupp I."/>
        </authorList>
    </citation>
    <scope>NUCLEOTIDE SEQUENCE [LARGE SCALE MRNA]</scope>
    <source>
        <tissue>Fetal kidney</tissue>
    </source>
</reference>
<reference key="3">
    <citation type="journal article" date="2003" name="Science">
        <title>Human chromosome 7: DNA sequence and biology.</title>
        <authorList>
            <person name="Scherer S.W."/>
            <person name="Cheung J."/>
            <person name="MacDonald J.R."/>
            <person name="Osborne L.R."/>
            <person name="Nakabayashi K."/>
            <person name="Herbrick J.-A."/>
            <person name="Carson A.R."/>
            <person name="Parker-Katiraee L."/>
            <person name="Skaug J."/>
            <person name="Khaja R."/>
            <person name="Zhang J."/>
            <person name="Hudek A.K."/>
            <person name="Li M."/>
            <person name="Haddad M."/>
            <person name="Duggan G.E."/>
            <person name="Fernandez B.A."/>
            <person name="Kanematsu E."/>
            <person name="Gentles S."/>
            <person name="Christopoulos C.C."/>
            <person name="Choufani S."/>
            <person name="Kwasnicka D."/>
            <person name="Zheng X.H."/>
            <person name="Lai Z."/>
            <person name="Nusskern D.R."/>
            <person name="Zhang Q."/>
            <person name="Gu Z."/>
            <person name="Lu F."/>
            <person name="Zeesman S."/>
            <person name="Nowaczyk M.J."/>
            <person name="Teshima I."/>
            <person name="Chitayat D."/>
            <person name="Shuman C."/>
            <person name="Weksberg R."/>
            <person name="Zackai E.H."/>
            <person name="Grebe T.A."/>
            <person name="Cox S.R."/>
            <person name="Kirkpatrick S.J."/>
            <person name="Rahman N."/>
            <person name="Friedman J.M."/>
            <person name="Heng H.H.Q."/>
            <person name="Pelicci P.G."/>
            <person name="Lo-Coco F."/>
            <person name="Belloni E."/>
            <person name="Shaffer L.G."/>
            <person name="Pober B."/>
            <person name="Morton C.C."/>
            <person name="Gusella J.F."/>
            <person name="Bruns G.A.P."/>
            <person name="Korf B.R."/>
            <person name="Quade B.J."/>
            <person name="Ligon A.H."/>
            <person name="Ferguson H."/>
            <person name="Higgins A.W."/>
            <person name="Leach N.T."/>
            <person name="Herrick S.R."/>
            <person name="Lemyre E."/>
            <person name="Farra C.G."/>
            <person name="Kim H.-G."/>
            <person name="Summers A.M."/>
            <person name="Gripp K.W."/>
            <person name="Roberts W."/>
            <person name="Szatmari P."/>
            <person name="Winsor E.J.T."/>
            <person name="Grzeschik K.-H."/>
            <person name="Teebi A."/>
            <person name="Minassian B.A."/>
            <person name="Kere J."/>
            <person name="Armengol L."/>
            <person name="Pujana M.A."/>
            <person name="Estivill X."/>
            <person name="Wilson M.D."/>
            <person name="Koop B.F."/>
            <person name="Tosi S."/>
            <person name="Moore G.E."/>
            <person name="Boright A.P."/>
            <person name="Zlotorynski E."/>
            <person name="Kerem B."/>
            <person name="Kroisel P.M."/>
            <person name="Petek E."/>
            <person name="Oscier D.G."/>
            <person name="Mould S.J."/>
            <person name="Doehner H."/>
            <person name="Doehner K."/>
            <person name="Rommens J.M."/>
            <person name="Vincent J.B."/>
            <person name="Venter J.C."/>
            <person name="Li P.W."/>
            <person name="Mural R.J."/>
            <person name="Adams M.D."/>
            <person name="Tsui L.-C."/>
        </authorList>
    </citation>
    <scope>NUCLEOTIDE SEQUENCE [LARGE SCALE GENOMIC DNA]</scope>
</reference>
<reference key="4">
    <citation type="submission" date="2005-09" db="EMBL/GenBank/DDBJ databases">
        <authorList>
            <person name="Mural R.J."/>
            <person name="Istrail S."/>
            <person name="Sutton G.G."/>
            <person name="Florea L."/>
            <person name="Halpern A.L."/>
            <person name="Mobarry C.M."/>
            <person name="Lippert R."/>
            <person name="Walenz B."/>
            <person name="Shatkay H."/>
            <person name="Dew I."/>
            <person name="Miller J.R."/>
            <person name="Flanigan M.J."/>
            <person name="Edwards N.J."/>
            <person name="Bolanos R."/>
            <person name="Fasulo D."/>
            <person name="Halldorsson B.V."/>
            <person name="Hannenhalli S."/>
            <person name="Turner R."/>
            <person name="Yooseph S."/>
            <person name="Lu F."/>
            <person name="Nusskern D.R."/>
            <person name="Shue B.C."/>
            <person name="Zheng X.H."/>
            <person name="Zhong F."/>
            <person name="Delcher A.L."/>
            <person name="Huson D.H."/>
            <person name="Kravitz S.A."/>
            <person name="Mouchard L."/>
            <person name="Reinert K."/>
            <person name="Remington K.A."/>
            <person name="Clark A.G."/>
            <person name="Waterman M.S."/>
            <person name="Eichler E.E."/>
            <person name="Adams M.D."/>
            <person name="Hunkapiller M.W."/>
            <person name="Myers E.W."/>
            <person name="Venter J.C."/>
        </authorList>
    </citation>
    <scope>NUCLEOTIDE SEQUENCE [LARGE SCALE GENOMIC DNA]</scope>
</reference>
<reference key="5">
    <citation type="journal article" date="2004" name="Genome Res.">
        <title>The status, quality, and expansion of the NIH full-length cDNA project: the Mammalian Gene Collection (MGC).</title>
        <authorList>
            <consortium name="The MGC Project Team"/>
        </authorList>
    </citation>
    <scope>NUCLEOTIDE SEQUENCE [LARGE SCALE MRNA]</scope>
    <scope>VARIANT ALA-26</scope>
    <source>
        <tissue>Brain</tissue>
        <tissue>Lung</tissue>
    </source>
</reference>
<reference key="6">
    <citation type="journal article" date="1995" name="Genomics">
        <title>Isolation and fine mapping of 16 novel human zinc finger-encoding cDNAs identify putative candidate genes for developmental and malignant disorders.</title>
        <authorList>
            <person name="Tommerup N."/>
            <person name="Vissing H."/>
        </authorList>
    </citation>
    <scope>NUCLEOTIDE SEQUENCE [MRNA] OF 240-563</scope>
    <source>
        <tissue>Insulinoma</tissue>
    </source>
</reference>
<reference key="7">
    <citation type="journal article" date="1990" name="New Biol.">
        <title>Multiple genes encoding zinc finger domains are expressed in human T cells.</title>
        <authorList>
            <person name="Thiesen H.-J."/>
        </authorList>
    </citation>
    <scope>NUCLEOTIDE SEQUENCE [MRNA] OF 405-460</scope>
    <source>
        <tissue>Lymphoid tissue</tissue>
    </source>
</reference>
<reference key="8">
    <citation type="journal article" date="2008" name="Mol. Cell">
        <title>Kinase-selective enrichment enables quantitative phosphoproteomics of the kinome across the cell cycle.</title>
        <authorList>
            <person name="Daub H."/>
            <person name="Olsen J.V."/>
            <person name="Bairlein M."/>
            <person name="Gnad F."/>
            <person name="Oppermann F.S."/>
            <person name="Korner R."/>
            <person name="Greff Z."/>
            <person name="Keri G."/>
            <person name="Stemmann O."/>
            <person name="Mann M."/>
        </authorList>
    </citation>
    <scope>PHOSPHORYLATION [LARGE SCALE ANALYSIS] AT SER-13</scope>
    <scope>IDENTIFICATION BY MASS SPECTROMETRY [LARGE SCALE ANALYSIS]</scope>
    <source>
        <tissue>Cervix carcinoma</tissue>
    </source>
</reference>
<reference key="9">
    <citation type="journal article" date="2008" name="Proc. Natl. Acad. Sci. U.S.A.">
        <title>A quantitative atlas of mitotic phosphorylation.</title>
        <authorList>
            <person name="Dephoure N."/>
            <person name="Zhou C."/>
            <person name="Villen J."/>
            <person name="Beausoleil S.A."/>
            <person name="Bakalarski C.E."/>
            <person name="Elledge S.J."/>
            <person name="Gygi S.P."/>
        </authorList>
    </citation>
    <scope>PHOSPHORYLATION [LARGE SCALE ANALYSIS] AT SER-13</scope>
    <scope>IDENTIFICATION BY MASS SPECTROMETRY [LARGE SCALE ANALYSIS]</scope>
    <source>
        <tissue>Cervix carcinoma</tissue>
    </source>
</reference>
<reference key="10">
    <citation type="journal article" date="2009" name="Mol. Cell. Proteomics">
        <title>Large-scale proteomics analysis of the human kinome.</title>
        <authorList>
            <person name="Oppermann F.S."/>
            <person name="Gnad F."/>
            <person name="Olsen J.V."/>
            <person name="Hornberger R."/>
            <person name="Greff Z."/>
            <person name="Keri G."/>
            <person name="Mann M."/>
            <person name="Daub H."/>
        </authorList>
    </citation>
    <scope>PHOSPHORYLATION [LARGE SCALE ANALYSIS] AT SER-13</scope>
    <scope>IDENTIFICATION BY MASS SPECTROMETRY [LARGE SCALE ANALYSIS]</scope>
</reference>
<reference key="11">
    <citation type="journal article" date="2009" name="Sci. Signal.">
        <title>Quantitative phosphoproteomic analysis of T cell receptor signaling reveals system-wide modulation of protein-protein interactions.</title>
        <authorList>
            <person name="Mayya V."/>
            <person name="Lundgren D.H."/>
            <person name="Hwang S.-I."/>
            <person name="Rezaul K."/>
            <person name="Wu L."/>
            <person name="Eng J.K."/>
            <person name="Rodionov V."/>
            <person name="Han D.K."/>
        </authorList>
    </citation>
    <scope>PHOSPHORYLATION [LARGE SCALE ANALYSIS] AT SER-13</scope>
    <scope>IDENTIFICATION BY MASS SPECTROMETRY [LARGE SCALE ANALYSIS]</scope>
    <source>
        <tissue>Leukemic T-cell</tissue>
    </source>
</reference>
<reference key="12">
    <citation type="journal article" date="2010" name="Sci. Signal.">
        <title>Quantitative phosphoproteomics reveals widespread full phosphorylation site occupancy during mitosis.</title>
        <authorList>
            <person name="Olsen J.V."/>
            <person name="Vermeulen M."/>
            <person name="Santamaria A."/>
            <person name="Kumar C."/>
            <person name="Miller M.L."/>
            <person name="Jensen L.J."/>
            <person name="Gnad F."/>
            <person name="Cox J."/>
            <person name="Jensen T.S."/>
            <person name="Nigg E.A."/>
            <person name="Brunak S."/>
            <person name="Mann M."/>
        </authorList>
    </citation>
    <scope>PHOSPHORYLATION [LARGE SCALE ANALYSIS] AT SER-13</scope>
    <scope>IDENTIFICATION BY MASS SPECTROMETRY [LARGE SCALE ANALYSIS]</scope>
    <source>
        <tissue>Cervix carcinoma</tissue>
    </source>
</reference>
<reference key="13">
    <citation type="journal article" date="2013" name="J. Proteome Res.">
        <title>Toward a comprehensive characterization of a human cancer cell phosphoproteome.</title>
        <authorList>
            <person name="Zhou H."/>
            <person name="Di Palma S."/>
            <person name="Preisinger C."/>
            <person name="Peng M."/>
            <person name="Polat A.N."/>
            <person name="Heck A.J."/>
            <person name="Mohammed S."/>
        </authorList>
    </citation>
    <scope>PHOSPHORYLATION [LARGE SCALE ANALYSIS] AT SER-13 AND SER-208</scope>
    <scope>IDENTIFICATION BY MASS SPECTROMETRY [LARGE SCALE ANALYSIS]</scope>
    <source>
        <tissue>Cervix carcinoma</tissue>
        <tissue>Erythroleukemia</tissue>
    </source>
</reference>
<reference key="14">
    <citation type="journal article" date="2014" name="J. Proteomics">
        <title>An enzyme assisted RP-RPLC approach for in-depth analysis of human liver phosphoproteome.</title>
        <authorList>
            <person name="Bian Y."/>
            <person name="Song C."/>
            <person name="Cheng K."/>
            <person name="Dong M."/>
            <person name="Wang F."/>
            <person name="Huang J."/>
            <person name="Sun D."/>
            <person name="Wang L."/>
            <person name="Ye M."/>
            <person name="Zou H."/>
        </authorList>
    </citation>
    <scope>PHOSPHORYLATION [LARGE SCALE ANALYSIS] AT SER-13 AND SER-208</scope>
    <scope>IDENTIFICATION BY MASS SPECTROMETRY [LARGE SCALE ANALYSIS]</scope>
    <source>
        <tissue>Liver</tissue>
    </source>
</reference>
<reference key="15">
    <citation type="journal article" date="2014" name="Nat. Struct. Mol. Biol.">
        <title>Uncovering global SUMOylation signaling networks in a site-specific manner.</title>
        <authorList>
            <person name="Hendriks I.A."/>
            <person name="D'Souza R.C."/>
            <person name="Yang B."/>
            <person name="Verlaan-de Vries M."/>
            <person name="Mann M."/>
            <person name="Vertegaal A.C."/>
        </authorList>
    </citation>
    <scope>SUMOYLATION [LARGE SCALE ANALYSIS] AT LYS-280 AND LYS-339</scope>
    <scope>IDENTIFICATION BY MASS SPECTROMETRY [LARGE SCALE ANALYSIS]</scope>
</reference>
<reference key="16">
    <citation type="journal article" date="2015" name="Cell Rep.">
        <title>SUMO-2 orchestrates chromatin modifiers in response to DNA damage.</title>
        <authorList>
            <person name="Hendriks I.A."/>
            <person name="Treffers L.W."/>
            <person name="Verlaan-de Vries M."/>
            <person name="Olsen J.V."/>
            <person name="Vertegaal A.C."/>
        </authorList>
    </citation>
    <scope>SUMOYLATION [LARGE SCALE ANALYSIS] AT LYS-339 AND LYS-560</scope>
    <scope>IDENTIFICATION BY MASS SPECTROMETRY [LARGE SCALE ANALYSIS]</scope>
</reference>
<reference key="17">
    <citation type="journal article" date="2017" name="Nat. Struct. Mol. Biol.">
        <title>Site-specific mapping of the human SUMO proteome reveals co-modification with phosphorylation.</title>
        <authorList>
            <person name="Hendriks I.A."/>
            <person name="Lyon D."/>
            <person name="Young C."/>
            <person name="Jensen L.J."/>
            <person name="Vertegaal A.C."/>
            <person name="Nielsen M.L."/>
        </authorList>
    </citation>
    <scope>SUMOYLATION [LARGE SCALE ANALYSIS] AT LYS-27; LYS-181; LYS-228; LYS-280; LYS-299; LYS-304; LYS-339; LYS-375; LYS-412; LYS-440; LYS-478 AND LYS-560</scope>
    <scope>IDENTIFICATION BY MASS SPECTROMETRY [LARGE SCALE ANALYSIS]</scope>
</reference>